<proteinExistence type="inferred from homology"/>
<sequence length="415" mass="47505">MSLQAPKGTKDLLPTESYKWQYLENKFRNIAADFGCREIRTPVFEYTELFQRGVGETTDVVQKEMYTFEDKAGRSITLKPEGTSPAVRAFVEGRLFNETQPTKMYYFTPVMRYENVQKGRLRQHHQFGIEIFGAKDASVDAEVISIPVGIYKELGVEGVELNINSIGCPKCRKTYNEALKKYLSKNYDKLCSTCKTRFDKNPLRILDCKVDTCKEIVKDAPIILDYICDECKDHFESLKSYLDVLDIKYKVDPFIVRGLDYYSKTVFEFIIDDITICAGGRYDYLIEEIGGPSMPAVGFGMGIERLLLTLQEKAIEIPEEAYVDLYLGNIGDKAKLEVLKLAKELRDRHIKCEIDHMGKSVKAQMKYANRIGAKYSMVLGEEELNTGKVSLKRMEDGKQIEVDIKEIDTLIKVFK</sequence>
<feature type="chain" id="PRO_1000016344" description="Histidine--tRNA ligase">
    <location>
        <begin position="1"/>
        <end position="415"/>
    </location>
</feature>
<gene>
    <name evidence="1" type="primary">hisS</name>
    <name type="ordered locus">CLI_3114</name>
</gene>
<evidence type="ECO:0000255" key="1">
    <source>
        <dbReference type="HAMAP-Rule" id="MF_00127"/>
    </source>
</evidence>
<reference key="1">
    <citation type="submission" date="2007-06" db="EMBL/GenBank/DDBJ databases">
        <authorList>
            <person name="Brinkac L.M."/>
            <person name="Daugherty S."/>
            <person name="Dodson R.J."/>
            <person name="Madupu R."/>
            <person name="Brown J.L."/>
            <person name="Bruce D."/>
            <person name="Detter C."/>
            <person name="Munk C."/>
            <person name="Smith L.A."/>
            <person name="Smith T.J."/>
            <person name="White O."/>
            <person name="Brettin T.S."/>
        </authorList>
    </citation>
    <scope>NUCLEOTIDE SEQUENCE [LARGE SCALE GENOMIC DNA]</scope>
    <source>
        <strain>Langeland / NCTC 10281 / Type F</strain>
    </source>
</reference>
<accession>A7GHS3</accession>
<keyword id="KW-0030">Aminoacyl-tRNA synthetase</keyword>
<keyword id="KW-0067">ATP-binding</keyword>
<keyword id="KW-0963">Cytoplasm</keyword>
<keyword id="KW-0436">Ligase</keyword>
<keyword id="KW-0547">Nucleotide-binding</keyword>
<keyword id="KW-0648">Protein biosynthesis</keyword>
<comment type="catalytic activity">
    <reaction evidence="1">
        <text>tRNA(His) + L-histidine + ATP = L-histidyl-tRNA(His) + AMP + diphosphate + H(+)</text>
        <dbReference type="Rhea" id="RHEA:17313"/>
        <dbReference type="Rhea" id="RHEA-COMP:9665"/>
        <dbReference type="Rhea" id="RHEA-COMP:9689"/>
        <dbReference type="ChEBI" id="CHEBI:15378"/>
        <dbReference type="ChEBI" id="CHEBI:30616"/>
        <dbReference type="ChEBI" id="CHEBI:33019"/>
        <dbReference type="ChEBI" id="CHEBI:57595"/>
        <dbReference type="ChEBI" id="CHEBI:78442"/>
        <dbReference type="ChEBI" id="CHEBI:78527"/>
        <dbReference type="ChEBI" id="CHEBI:456215"/>
        <dbReference type="EC" id="6.1.1.21"/>
    </reaction>
</comment>
<comment type="subunit">
    <text evidence="1">Homodimer.</text>
</comment>
<comment type="subcellular location">
    <subcellularLocation>
        <location evidence="1">Cytoplasm</location>
    </subcellularLocation>
</comment>
<comment type="similarity">
    <text evidence="1">Belongs to the class-II aminoacyl-tRNA synthetase family.</text>
</comment>
<organism>
    <name type="scientific">Clostridium botulinum (strain Langeland / NCTC 10281 / Type F)</name>
    <dbReference type="NCBI Taxonomy" id="441772"/>
    <lineage>
        <taxon>Bacteria</taxon>
        <taxon>Bacillati</taxon>
        <taxon>Bacillota</taxon>
        <taxon>Clostridia</taxon>
        <taxon>Eubacteriales</taxon>
        <taxon>Clostridiaceae</taxon>
        <taxon>Clostridium</taxon>
    </lineage>
</organism>
<dbReference type="EC" id="6.1.1.21" evidence="1"/>
<dbReference type="EMBL" id="CP000728">
    <property type="protein sequence ID" value="ABS42222.1"/>
    <property type="molecule type" value="Genomic_DNA"/>
</dbReference>
<dbReference type="RefSeq" id="WP_012100786.1">
    <property type="nucleotide sequence ID" value="NC_009699.1"/>
</dbReference>
<dbReference type="SMR" id="A7GHS3"/>
<dbReference type="KEGG" id="cbf:CLI_3114"/>
<dbReference type="HOGENOM" id="CLU_025113_1_1_9"/>
<dbReference type="Proteomes" id="UP000002410">
    <property type="component" value="Chromosome"/>
</dbReference>
<dbReference type="GO" id="GO:0005737">
    <property type="term" value="C:cytoplasm"/>
    <property type="evidence" value="ECO:0007669"/>
    <property type="project" value="UniProtKB-SubCell"/>
</dbReference>
<dbReference type="GO" id="GO:0005524">
    <property type="term" value="F:ATP binding"/>
    <property type="evidence" value="ECO:0007669"/>
    <property type="project" value="UniProtKB-UniRule"/>
</dbReference>
<dbReference type="GO" id="GO:0140096">
    <property type="term" value="F:catalytic activity, acting on a protein"/>
    <property type="evidence" value="ECO:0007669"/>
    <property type="project" value="UniProtKB-ARBA"/>
</dbReference>
<dbReference type="GO" id="GO:0004821">
    <property type="term" value="F:histidine-tRNA ligase activity"/>
    <property type="evidence" value="ECO:0007669"/>
    <property type="project" value="UniProtKB-UniRule"/>
</dbReference>
<dbReference type="GO" id="GO:0016740">
    <property type="term" value="F:transferase activity"/>
    <property type="evidence" value="ECO:0007669"/>
    <property type="project" value="UniProtKB-ARBA"/>
</dbReference>
<dbReference type="GO" id="GO:0006427">
    <property type="term" value="P:histidyl-tRNA aminoacylation"/>
    <property type="evidence" value="ECO:0007669"/>
    <property type="project" value="UniProtKB-UniRule"/>
</dbReference>
<dbReference type="CDD" id="cd00773">
    <property type="entry name" value="HisRS-like_core"/>
    <property type="match status" value="1"/>
</dbReference>
<dbReference type="CDD" id="cd00859">
    <property type="entry name" value="HisRS_anticodon"/>
    <property type="match status" value="1"/>
</dbReference>
<dbReference type="FunFam" id="3.30.930.10:FF:000005">
    <property type="entry name" value="Histidine--tRNA ligase"/>
    <property type="match status" value="1"/>
</dbReference>
<dbReference type="Gene3D" id="3.40.50.800">
    <property type="entry name" value="Anticodon-binding domain"/>
    <property type="match status" value="1"/>
</dbReference>
<dbReference type="Gene3D" id="3.30.930.10">
    <property type="entry name" value="Bira Bifunctional Protein, Domain 2"/>
    <property type="match status" value="1"/>
</dbReference>
<dbReference type="HAMAP" id="MF_00127">
    <property type="entry name" value="His_tRNA_synth"/>
    <property type="match status" value="1"/>
</dbReference>
<dbReference type="InterPro" id="IPR006195">
    <property type="entry name" value="aa-tRNA-synth_II"/>
</dbReference>
<dbReference type="InterPro" id="IPR045864">
    <property type="entry name" value="aa-tRNA-synth_II/BPL/LPL"/>
</dbReference>
<dbReference type="InterPro" id="IPR004154">
    <property type="entry name" value="Anticodon-bd"/>
</dbReference>
<dbReference type="InterPro" id="IPR036621">
    <property type="entry name" value="Anticodon-bd_dom_sf"/>
</dbReference>
<dbReference type="InterPro" id="IPR015807">
    <property type="entry name" value="His-tRNA-ligase"/>
</dbReference>
<dbReference type="InterPro" id="IPR041715">
    <property type="entry name" value="HisRS-like_core"/>
</dbReference>
<dbReference type="InterPro" id="IPR004516">
    <property type="entry name" value="HisRS/HisZ"/>
</dbReference>
<dbReference type="InterPro" id="IPR033656">
    <property type="entry name" value="HisRS_anticodon"/>
</dbReference>
<dbReference type="NCBIfam" id="TIGR00442">
    <property type="entry name" value="hisS"/>
    <property type="match status" value="1"/>
</dbReference>
<dbReference type="PANTHER" id="PTHR43707:SF1">
    <property type="entry name" value="HISTIDINE--TRNA LIGASE, MITOCHONDRIAL-RELATED"/>
    <property type="match status" value="1"/>
</dbReference>
<dbReference type="PANTHER" id="PTHR43707">
    <property type="entry name" value="HISTIDYL-TRNA SYNTHETASE"/>
    <property type="match status" value="1"/>
</dbReference>
<dbReference type="Pfam" id="PF03129">
    <property type="entry name" value="HGTP_anticodon"/>
    <property type="match status" value="1"/>
</dbReference>
<dbReference type="Pfam" id="PF13393">
    <property type="entry name" value="tRNA-synt_His"/>
    <property type="match status" value="1"/>
</dbReference>
<dbReference type="PIRSF" id="PIRSF001549">
    <property type="entry name" value="His-tRNA_synth"/>
    <property type="match status" value="1"/>
</dbReference>
<dbReference type="SUPFAM" id="SSF52954">
    <property type="entry name" value="Class II aaRS ABD-related"/>
    <property type="match status" value="1"/>
</dbReference>
<dbReference type="SUPFAM" id="SSF55681">
    <property type="entry name" value="Class II aaRS and biotin synthetases"/>
    <property type="match status" value="1"/>
</dbReference>
<dbReference type="PROSITE" id="PS50862">
    <property type="entry name" value="AA_TRNA_LIGASE_II"/>
    <property type="match status" value="1"/>
</dbReference>
<protein>
    <recommendedName>
        <fullName evidence="1">Histidine--tRNA ligase</fullName>
        <ecNumber evidence="1">6.1.1.21</ecNumber>
    </recommendedName>
    <alternativeName>
        <fullName evidence="1">Histidyl-tRNA synthetase</fullName>
        <shortName evidence="1">HisRS</shortName>
    </alternativeName>
</protein>
<name>SYH_CLOBL</name>